<protein>
    <recommendedName>
        <fullName evidence="1">Malate dehydrogenase</fullName>
        <ecNumber evidence="1">1.1.1.37</ecNumber>
    </recommendedName>
</protein>
<comment type="function">
    <text evidence="1">Catalyzes the reversible oxidation of malate to oxaloacetate.</text>
</comment>
<comment type="catalytic activity">
    <reaction evidence="1">
        <text>(S)-malate + NAD(+) = oxaloacetate + NADH + H(+)</text>
        <dbReference type="Rhea" id="RHEA:21432"/>
        <dbReference type="ChEBI" id="CHEBI:15378"/>
        <dbReference type="ChEBI" id="CHEBI:15589"/>
        <dbReference type="ChEBI" id="CHEBI:16452"/>
        <dbReference type="ChEBI" id="CHEBI:57540"/>
        <dbReference type="ChEBI" id="CHEBI:57945"/>
        <dbReference type="EC" id="1.1.1.37"/>
    </reaction>
</comment>
<comment type="similarity">
    <text evidence="3">Belongs to the LDH/MDH superfamily.</text>
</comment>
<gene>
    <name type="primary">mdh</name>
    <name type="ordered locus">OE_4323F</name>
</gene>
<name>MDH_HALS3</name>
<keyword id="KW-0520">NAD</keyword>
<keyword id="KW-0560">Oxidoreductase</keyword>
<keyword id="KW-0816">Tricarboxylic acid cycle</keyword>
<sequence>MTKVSIVGAAGTVGAAAGYNLALRDVVDELVFVDIPDKEEETIGQAADANHGVAYDANTDVVQGDYADTAGSDVVVITAGIPRQPGQSRTDLAGDNAPIMEDIGSSLAEHNDDFVTVTTSNPVDLLNRHLYESGDRDRHSVVGFGGRLDSARFRYVLGQRFDVPVQNVDATILGEHGDAQVPVFSKVRVNGTDPAFSADEREEILADLQESAMNVIEKKGATQWGPATGVAHMVEAILNDTGEVLPGSMVLDGEYGLDDVGLGVPVKLGSDGVEEVVEWELTADERDLLDEAAEKLSAQYDEIA</sequence>
<organism>
    <name type="scientific">Halobacterium salinarum (strain ATCC 29341 / DSM 671 / R1)</name>
    <dbReference type="NCBI Taxonomy" id="478009"/>
    <lineage>
        <taxon>Archaea</taxon>
        <taxon>Methanobacteriati</taxon>
        <taxon>Methanobacteriota</taxon>
        <taxon>Stenosarchaea group</taxon>
        <taxon>Halobacteria</taxon>
        <taxon>Halobacteriales</taxon>
        <taxon>Halobacteriaceae</taxon>
        <taxon>Halobacterium</taxon>
        <taxon>Halobacterium salinarum NRC-34001</taxon>
    </lineage>
</organism>
<feature type="chain" id="PRO_1000126135" description="Malate dehydrogenase">
    <location>
        <begin position="1"/>
        <end position="304"/>
    </location>
</feature>
<feature type="active site" description="Proton acceptor" evidence="2">
    <location>
        <position position="176"/>
    </location>
</feature>
<feature type="binding site" evidence="1">
    <location>
        <begin position="8"/>
        <end position="14"/>
    </location>
    <ligand>
        <name>NAD(+)</name>
        <dbReference type="ChEBI" id="CHEBI:57540"/>
    </ligand>
</feature>
<feature type="binding site" evidence="1">
    <location>
        <position position="34"/>
    </location>
    <ligand>
        <name>NAD(+)</name>
        <dbReference type="ChEBI" id="CHEBI:57540"/>
    </ligand>
</feature>
<feature type="binding site" evidence="2">
    <location>
        <position position="83"/>
    </location>
    <ligand>
        <name>substrate</name>
    </ligand>
</feature>
<feature type="binding site" evidence="2">
    <location>
        <position position="89"/>
    </location>
    <ligand>
        <name>substrate</name>
    </ligand>
</feature>
<feature type="binding site" evidence="1">
    <location>
        <position position="96"/>
    </location>
    <ligand>
        <name>NAD(+)</name>
        <dbReference type="ChEBI" id="CHEBI:57540"/>
    </ligand>
</feature>
<feature type="binding site" evidence="1">
    <location>
        <begin position="119"/>
        <end position="121"/>
    </location>
    <ligand>
        <name>NAD(+)</name>
        <dbReference type="ChEBI" id="CHEBI:57540"/>
    </ligand>
</feature>
<feature type="binding site" evidence="2">
    <location>
        <position position="121"/>
    </location>
    <ligand>
        <name>substrate</name>
    </ligand>
</feature>
<feature type="binding site" evidence="2">
    <location>
        <position position="152"/>
    </location>
    <ligand>
        <name>substrate</name>
    </ligand>
</feature>
<evidence type="ECO:0000250" key="1">
    <source>
        <dbReference type="UniProtKB" id="O08349"/>
    </source>
</evidence>
<evidence type="ECO:0000250" key="2">
    <source>
        <dbReference type="UniProtKB" id="P61889"/>
    </source>
</evidence>
<evidence type="ECO:0000305" key="3"/>
<reference key="1">
    <citation type="journal article" date="2008" name="Genomics">
        <title>Evolution in the laboratory: the genome of Halobacterium salinarum strain R1 compared to that of strain NRC-1.</title>
        <authorList>
            <person name="Pfeiffer F."/>
            <person name="Schuster S.C."/>
            <person name="Broicher A."/>
            <person name="Falb M."/>
            <person name="Palm P."/>
            <person name="Rodewald K."/>
            <person name="Ruepp A."/>
            <person name="Soppa J."/>
            <person name="Tittor J."/>
            <person name="Oesterhelt D."/>
        </authorList>
    </citation>
    <scope>NUCLEOTIDE SEQUENCE [LARGE SCALE GENOMIC DNA]</scope>
    <source>
        <strain>ATCC 29341 / DSM 671 / R1</strain>
    </source>
</reference>
<accession>B0R7Q0</accession>
<dbReference type="EC" id="1.1.1.37" evidence="1"/>
<dbReference type="EMBL" id="AM774415">
    <property type="protein sequence ID" value="CAP14769.1"/>
    <property type="molecule type" value="Genomic_DNA"/>
</dbReference>
<dbReference type="RefSeq" id="WP_010903765.1">
    <property type="nucleotide sequence ID" value="NC_010364.1"/>
</dbReference>
<dbReference type="SMR" id="B0R7Q0"/>
<dbReference type="EnsemblBacteria" id="CAP14769">
    <property type="protein sequence ID" value="CAP14769"/>
    <property type="gene ID" value="OE_4323F"/>
</dbReference>
<dbReference type="GeneID" id="89348389"/>
<dbReference type="KEGG" id="hsl:OE_4323F"/>
<dbReference type="HOGENOM" id="CLU_045401_1_1_2"/>
<dbReference type="PhylomeDB" id="B0R7Q0"/>
<dbReference type="Proteomes" id="UP000001321">
    <property type="component" value="Chromosome"/>
</dbReference>
<dbReference type="GO" id="GO:0004459">
    <property type="term" value="F:L-lactate dehydrogenase activity"/>
    <property type="evidence" value="ECO:0007669"/>
    <property type="project" value="TreeGrafter"/>
</dbReference>
<dbReference type="GO" id="GO:0030060">
    <property type="term" value="F:L-malate dehydrogenase (NAD+) activity"/>
    <property type="evidence" value="ECO:0007669"/>
    <property type="project" value="UniProtKB-EC"/>
</dbReference>
<dbReference type="GO" id="GO:0006089">
    <property type="term" value="P:lactate metabolic process"/>
    <property type="evidence" value="ECO:0007669"/>
    <property type="project" value="TreeGrafter"/>
</dbReference>
<dbReference type="GO" id="GO:0006099">
    <property type="term" value="P:tricarboxylic acid cycle"/>
    <property type="evidence" value="ECO:0007669"/>
    <property type="project" value="UniProtKB-KW"/>
</dbReference>
<dbReference type="Gene3D" id="3.90.110.10">
    <property type="entry name" value="Lactate dehydrogenase/glycoside hydrolase, family 4, C-terminal"/>
    <property type="match status" value="1"/>
</dbReference>
<dbReference type="Gene3D" id="3.40.50.720">
    <property type="entry name" value="NAD(P)-binding Rossmann-like Domain"/>
    <property type="match status" value="1"/>
</dbReference>
<dbReference type="InterPro" id="IPR001557">
    <property type="entry name" value="L-lactate/malate_DH"/>
</dbReference>
<dbReference type="InterPro" id="IPR022383">
    <property type="entry name" value="Lactate/malate_DH_C"/>
</dbReference>
<dbReference type="InterPro" id="IPR001236">
    <property type="entry name" value="Lactate/malate_DH_N"/>
</dbReference>
<dbReference type="InterPro" id="IPR015955">
    <property type="entry name" value="Lactate_DH/Glyco_Ohase_4_C"/>
</dbReference>
<dbReference type="InterPro" id="IPR053411">
    <property type="entry name" value="MDH"/>
</dbReference>
<dbReference type="InterPro" id="IPR036291">
    <property type="entry name" value="NAD(P)-bd_dom_sf"/>
</dbReference>
<dbReference type="NCBIfam" id="NF041314">
    <property type="entry name" value="Malate_DH_Halo"/>
    <property type="match status" value="1"/>
</dbReference>
<dbReference type="NCBIfam" id="NF004863">
    <property type="entry name" value="PRK06223.1"/>
    <property type="match status" value="1"/>
</dbReference>
<dbReference type="PANTHER" id="PTHR43128">
    <property type="entry name" value="L-2-HYDROXYCARBOXYLATE DEHYDROGENASE (NAD(P)(+))"/>
    <property type="match status" value="1"/>
</dbReference>
<dbReference type="PANTHER" id="PTHR43128:SF16">
    <property type="entry name" value="L-LACTATE DEHYDROGENASE"/>
    <property type="match status" value="1"/>
</dbReference>
<dbReference type="Pfam" id="PF02866">
    <property type="entry name" value="Ldh_1_C"/>
    <property type="match status" value="1"/>
</dbReference>
<dbReference type="Pfam" id="PF00056">
    <property type="entry name" value="Ldh_1_N"/>
    <property type="match status" value="1"/>
</dbReference>
<dbReference type="PIRSF" id="PIRSF000102">
    <property type="entry name" value="Lac_mal_DH"/>
    <property type="match status" value="1"/>
</dbReference>
<dbReference type="PRINTS" id="PR00086">
    <property type="entry name" value="LLDHDRGNASE"/>
</dbReference>
<dbReference type="SUPFAM" id="SSF56327">
    <property type="entry name" value="LDH C-terminal domain-like"/>
    <property type="match status" value="1"/>
</dbReference>
<dbReference type="SUPFAM" id="SSF51735">
    <property type="entry name" value="NAD(P)-binding Rossmann-fold domains"/>
    <property type="match status" value="1"/>
</dbReference>
<proteinExistence type="inferred from homology"/>